<gene>
    <name evidence="1" type="primary">groES</name>
    <name evidence="1" type="synonym">groS</name>
    <name type="ordered locus">PXO_03704</name>
</gene>
<keyword id="KW-0143">Chaperone</keyword>
<keyword id="KW-0963">Cytoplasm</keyword>
<protein>
    <recommendedName>
        <fullName evidence="1">Co-chaperonin GroES</fullName>
    </recommendedName>
    <alternativeName>
        <fullName evidence="1">10 kDa chaperonin</fullName>
    </alternativeName>
    <alternativeName>
        <fullName evidence="1">Chaperonin-10</fullName>
        <shortName evidence="1">Cpn10</shortName>
    </alternativeName>
</protein>
<evidence type="ECO:0000255" key="1">
    <source>
        <dbReference type="HAMAP-Rule" id="MF_00580"/>
    </source>
</evidence>
<comment type="function">
    <text evidence="1">Together with the chaperonin GroEL, plays an essential role in assisting protein folding. The GroEL-GroES system forms a nano-cage that allows encapsulation of the non-native substrate proteins and provides a physical environment optimized to promote and accelerate protein folding. GroES binds to the apical surface of the GroEL ring, thereby capping the opening of the GroEL channel.</text>
</comment>
<comment type="subunit">
    <text evidence="1">Heptamer of 7 subunits arranged in a ring. Interacts with the chaperonin GroEL.</text>
</comment>
<comment type="subcellular location">
    <subcellularLocation>
        <location evidence="1">Cytoplasm</location>
    </subcellularLocation>
</comment>
<comment type="similarity">
    <text evidence="1">Belongs to the GroES chaperonin family.</text>
</comment>
<accession>B2SJG3</accession>
<sequence>MSIKPLHDRVVVKPIEADEVSAGGIVIPDSAKEKSTKGEVVAIGAGKPLDNGSLRAPVVKVGDKVIYGQYAGSSYKSEGVEYKVLREDDILAVIG</sequence>
<reference key="1">
    <citation type="journal article" date="2008" name="BMC Genomics">
        <title>Genome sequence and rapid evolution of the rice pathogen Xanthomonas oryzae pv. oryzae PXO99A.</title>
        <authorList>
            <person name="Salzberg S.L."/>
            <person name="Sommer D.D."/>
            <person name="Schatz M.C."/>
            <person name="Phillippy A.M."/>
            <person name="Rabinowicz P.D."/>
            <person name="Tsuge S."/>
            <person name="Furutani A."/>
            <person name="Ochiai H."/>
            <person name="Delcher A.L."/>
            <person name="Kelley D."/>
            <person name="Madupu R."/>
            <person name="Puiu D."/>
            <person name="Radune D."/>
            <person name="Shumway M."/>
            <person name="Trapnell C."/>
            <person name="Aparna G."/>
            <person name="Jha G."/>
            <person name="Pandey A."/>
            <person name="Patil P.B."/>
            <person name="Ishihara H."/>
            <person name="Meyer D.F."/>
            <person name="Szurek B."/>
            <person name="Verdier V."/>
            <person name="Koebnik R."/>
            <person name="Dow J.M."/>
            <person name="Ryan R.P."/>
            <person name="Hirata H."/>
            <person name="Tsuyumu S."/>
            <person name="Won Lee S."/>
            <person name="Seo Y.-S."/>
            <person name="Sriariyanum M."/>
            <person name="Ronald P.C."/>
            <person name="Sonti R.V."/>
            <person name="Van Sluys M.-A."/>
            <person name="Leach J.E."/>
            <person name="White F.F."/>
            <person name="Bogdanove A.J."/>
        </authorList>
    </citation>
    <scope>NUCLEOTIDE SEQUENCE [LARGE SCALE GENOMIC DNA]</scope>
    <source>
        <strain>PXO99A</strain>
    </source>
</reference>
<proteinExistence type="inferred from homology"/>
<organism>
    <name type="scientific">Xanthomonas oryzae pv. oryzae (strain PXO99A)</name>
    <dbReference type="NCBI Taxonomy" id="360094"/>
    <lineage>
        <taxon>Bacteria</taxon>
        <taxon>Pseudomonadati</taxon>
        <taxon>Pseudomonadota</taxon>
        <taxon>Gammaproteobacteria</taxon>
        <taxon>Lysobacterales</taxon>
        <taxon>Lysobacteraceae</taxon>
        <taxon>Xanthomonas</taxon>
    </lineage>
</organism>
<feature type="chain" id="PRO_1000129726" description="Co-chaperonin GroES">
    <location>
        <begin position="1"/>
        <end position="95"/>
    </location>
</feature>
<name>CH10_XANOP</name>
<dbReference type="EMBL" id="CP000967">
    <property type="protein sequence ID" value="ACD57161.1"/>
    <property type="molecule type" value="Genomic_DNA"/>
</dbReference>
<dbReference type="RefSeq" id="WP_003483210.1">
    <property type="nucleotide sequence ID" value="NC_010717.2"/>
</dbReference>
<dbReference type="SMR" id="B2SJG3"/>
<dbReference type="KEGG" id="xop:PXO_03704"/>
<dbReference type="eggNOG" id="COG0234">
    <property type="taxonomic scope" value="Bacteria"/>
</dbReference>
<dbReference type="HOGENOM" id="CLU_132825_2_0_6"/>
<dbReference type="Proteomes" id="UP000001740">
    <property type="component" value="Chromosome"/>
</dbReference>
<dbReference type="GO" id="GO:0005737">
    <property type="term" value="C:cytoplasm"/>
    <property type="evidence" value="ECO:0007669"/>
    <property type="project" value="UniProtKB-SubCell"/>
</dbReference>
<dbReference type="GO" id="GO:0005524">
    <property type="term" value="F:ATP binding"/>
    <property type="evidence" value="ECO:0007669"/>
    <property type="project" value="InterPro"/>
</dbReference>
<dbReference type="GO" id="GO:0046872">
    <property type="term" value="F:metal ion binding"/>
    <property type="evidence" value="ECO:0007669"/>
    <property type="project" value="TreeGrafter"/>
</dbReference>
<dbReference type="GO" id="GO:0044183">
    <property type="term" value="F:protein folding chaperone"/>
    <property type="evidence" value="ECO:0007669"/>
    <property type="project" value="InterPro"/>
</dbReference>
<dbReference type="GO" id="GO:0051087">
    <property type="term" value="F:protein-folding chaperone binding"/>
    <property type="evidence" value="ECO:0007669"/>
    <property type="project" value="TreeGrafter"/>
</dbReference>
<dbReference type="GO" id="GO:0051082">
    <property type="term" value="F:unfolded protein binding"/>
    <property type="evidence" value="ECO:0007669"/>
    <property type="project" value="TreeGrafter"/>
</dbReference>
<dbReference type="GO" id="GO:0051085">
    <property type="term" value="P:chaperone cofactor-dependent protein refolding"/>
    <property type="evidence" value="ECO:0007669"/>
    <property type="project" value="TreeGrafter"/>
</dbReference>
<dbReference type="CDD" id="cd00320">
    <property type="entry name" value="cpn10"/>
    <property type="match status" value="1"/>
</dbReference>
<dbReference type="FunFam" id="2.30.33.40:FF:000001">
    <property type="entry name" value="10 kDa chaperonin"/>
    <property type="match status" value="1"/>
</dbReference>
<dbReference type="Gene3D" id="2.30.33.40">
    <property type="entry name" value="GroES chaperonin"/>
    <property type="match status" value="1"/>
</dbReference>
<dbReference type="HAMAP" id="MF_00580">
    <property type="entry name" value="CH10"/>
    <property type="match status" value="1"/>
</dbReference>
<dbReference type="InterPro" id="IPR020818">
    <property type="entry name" value="Chaperonin_GroES"/>
</dbReference>
<dbReference type="InterPro" id="IPR037124">
    <property type="entry name" value="Chaperonin_GroES_sf"/>
</dbReference>
<dbReference type="InterPro" id="IPR018369">
    <property type="entry name" value="Chaprnonin_Cpn10_CS"/>
</dbReference>
<dbReference type="InterPro" id="IPR011032">
    <property type="entry name" value="GroES-like_sf"/>
</dbReference>
<dbReference type="NCBIfam" id="NF001527">
    <property type="entry name" value="PRK00364.1-2"/>
    <property type="match status" value="1"/>
</dbReference>
<dbReference type="NCBIfam" id="NF001531">
    <property type="entry name" value="PRK00364.2-2"/>
    <property type="match status" value="1"/>
</dbReference>
<dbReference type="NCBIfam" id="NF001533">
    <property type="entry name" value="PRK00364.2-4"/>
    <property type="match status" value="1"/>
</dbReference>
<dbReference type="PANTHER" id="PTHR10772">
    <property type="entry name" value="10 KDA HEAT SHOCK PROTEIN"/>
    <property type="match status" value="1"/>
</dbReference>
<dbReference type="PANTHER" id="PTHR10772:SF58">
    <property type="entry name" value="CO-CHAPERONIN GROES"/>
    <property type="match status" value="1"/>
</dbReference>
<dbReference type="Pfam" id="PF00166">
    <property type="entry name" value="Cpn10"/>
    <property type="match status" value="1"/>
</dbReference>
<dbReference type="PRINTS" id="PR00297">
    <property type="entry name" value="CHAPERONIN10"/>
</dbReference>
<dbReference type="SMART" id="SM00883">
    <property type="entry name" value="Cpn10"/>
    <property type="match status" value="1"/>
</dbReference>
<dbReference type="SUPFAM" id="SSF50129">
    <property type="entry name" value="GroES-like"/>
    <property type="match status" value="1"/>
</dbReference>
<dbReference type="PROSITE" id="PS00681">
    <property type="entry name" value="CHAPERONINS_CPN10"/>
    <property type="match status" value="1"/>
</dbReference>